<feature type="initiator methionine" description="Removed">
    <location>
        <position position="1"/>
    </location>
</feature>
<feature type="chain" id="PRO_0000087841" description="1,3-propanediol dehydrogenase">
    <location>
        <begin position="2"/>
        <end position="387"/>
    </location>
</feature>
<accession>P45513</accession>
<dbReference type="EC" id="1.1.1.202" evidence="1"/>
<dbReference type="EMBL" id="U09771">
    <property type="protein sequence ID" value="AAB48848.1"/>
    <property type="molecule type" value="Genomic_DNA"/>
</dbReference>
<dbReference type="PIR" id="A56275">
    <property type="entry name" value="A56275"/>
</dbReference>
<dbReference type="SMR" id="P45513"/>
<dbReference type="STRING" id="1333848.CFNIH1_02620"/>
<dbReference type="BRENDA" id="1.1.1.202">
    <property type="organism ID" value="1398"/>
</dbReference>
<dbReference type="GO" id="GO:0047516">
    <property type="term" value="F:1,3-propanediol dehydrogenase activity"/>
    <property type="evidence" value="ECO:0000314"/>
    <property type="project" value="CACAO"/>
</dbReference>
<dbReference type="GO" id="GO:0004022">
    <property type="term" value="F:alcohol dehydrogenase (NAD+) activity"/>
    <property type="evidence" value="ECO:0007669"/>
    <property type="project" value="TreeGrafter"/>
</dbReference>
<dbReference type="GO" id="GO:0046872">
    <property type="term" value="F:metal ion binding"/>
    <property type="evidence" value="ECO:0007669"/>
    <property type="project" value="InterPro"/>
</dbReference>
<dbReference type="CDD" id="cd08188">
    <property type="entry name" value="PDDH"/>
    <property type="match status" value="1"/>
</dbReference>
<dbReference type="FunFam" id="3.40.50.1970:FF:000003">
    <property type="entry name" value="Alcohol dehydrogenase, iron-containing"/>
    <property type="match status" value="1"/>
</dbReference>
<dbReference type="FunFam" id="1.20.1090.10:FF:000001">
    <property type="entry name" value="Aldehyde-alcohol dehydrogenase"/>
    <property type="match status" value="1"/>
</dbReference>
<dbReference type="Gene3D" id="3.40.50.1970">
    <property type="match status" value="1"/>
</dbReference>
<dbReference type="Gene3D" id="1.20.1090.10">
    <property type="entry name" value="Dehydroquinate synthase-like - alpha domain"/>
    <property type="match status" value="1"/>
</dbReference>
<dbReference type="InterPro" id="IPR001670">
    <property type="entry name" value="ADH_Fe/GldA"/>
</dbReference>
<dbReference type="InterPro" id="IPR056798">
    <property type="entry name" value="ADH_Fe_C"/>
</dbReference>
<dbReference type="InterPro" id="IPR018211">
    <property type="entry name" value="ADH_Fe_CS"/>
</dbReference>
<dbReference type="InterPro" id="IPR039697">
    <property type="entry name" value="Alcohol_dehydrogenase_Fe"/>
</dbReference>
<dbReference type="PANTHER" id="PTHR11496">
    <property type="entry name" value="ALCOHOL DEHYDROGENASE"/>
    <property type="match status" value="1"/>
</dbReference>
<dbReference type="PANTHER" id="PTHR11496:SF102">
    <property type="entry name" value="ALCOHOL DEHYDROGENASE 4"/>
    <property type="match status" value="1"/>
</dbReference>
<dbReference type="Pfam" id="PF25137">
    <property type="entry name" value="ADH_Fe_C"/>
    <property type="match status" value="1"/>
</dbReference>
<dbReference type="Pfam" id="PF00465">
    <property type="entry name" value="Fe-ADH"/>
    <property type="match status" value="1"/>
</dbReference>
<dbReference type="SUPFAM" id="SSF56796">
    <property type="entry name" value="Dehydroquinate synthase-like"/>
    <property type="match status" value="1"/>
</dbReference>
<dbReference type="PROSITE" id="PS00913">
    <property type="entry name" value="ADH_IRON_1"/>
    <property type="match status" value="1"/>
</dbReference>
<dbReference type="PROSITE" id="PS00060">
    <property type="entry name" value="ADH_IRON_2"/>
    <property type="match status" value="1"/>
</dbReference>
<protein>
    <recommendedName>
        <fullName evidence="2">1,3-propanediol dehydrogenase</fullName>
        <ecNumber evidence="1">1.1.1.202</ecNumber>
    </recommendedName>
    <alternativeName>
        <fullName>1,3-propanediol oxidoreductase</fullName>
    </alternativeName>
    <alternativeName>
        <fullName>3-hydroxypropionaldehyde reductase</fullName>
    </alternativeName>
</protein>
<proteinExistence type="evidence at protein level"/>
<keyword id="KW-0903">Direct protein sequencing</keyword>
<keyword id="KW-0408">Iron</keyword>
<keyword id="KW-0520">NAD</keyword>
<keyword id="KW-0560">Oxidoreductase</keyword>
<comment type="function">
    <text evidence="1">Catalyzes the reduction of 3-hydroxypropanal. Is considerably less active with glyceraldehyde, propionaldehyde, acetaldehyde, and butyraldehyde. Also catalyzes the oxidation of various primary, secondary, and tertiary alcohols. Is most active with substrates containing two primary alcohol groups separated by one or two carbon atoms. 1,3-propanediol is the preferred substrate.</text>
</comment>
<comment type="catalytic activity">
    <reaction evidence="1">
        <text>propane-1,3-diol + NAD(+) = 3-hydroxypropanal + NADH + H(+)</text>
        <dbReference type="Rhea" id="RHEA:23188"/>
        <dbReference type="ChEBI" id="CHEBI:15378"/>
        <dbReference type="ChEBI" id="CHEBI:16109"/>
        <dbReference type="ChEBI" id="CHEBI:17871"/>
        <dbReference type="ChEBI" id="CHEBI:57540"/>
        <dbReference type="ChEBI" id="CHEBI:57945"/>
        <dbReference type="EC" id="1.1.1.202"/>
    </reaction>
    <physiologicalReaction direction="right-to-left" evidence="1">
        <dbReference type="Rhea" id="RHEA:23190"/>
    </physiologicalReaction>
</comment>
<comment type="cofactor">
    <cofactor evidence="1">
        <name>Fe cation</name>
        <dbReference type="ChEBI" id="CHEBI:24875"/>
    </cofactor>
</comment>
<comment type="activity regulation">
    <text evidence="1">Inhibited by the metal chelator 1,10-phenanthroline.</text>
</comment>
<comment type="biophysicochemical properties">
    <kinetics>
        <KM evidence="1">0.14 mM for 3-hydroxypropanal</KM>
        <KM evidence="1">1.25 mM for 1,3-propanediol</KM>
        <KM evidence="1">11 mM for propionaldehyde</KM>
        <KM evidence="1">0.3 mM for NAD(+) (with 1,3-propanediol as substrate)</KM>
        <KM evidence="1">0.033 mM for NADH (with propionaldehyde as substrate)</KM>
    </kinetics>
</comment>
<comment type="subunit">
    <text evidence="1">Homooctamer.</text>
</comment>
<comment type="similarity">
    <text evidence="3">Belongs to the iron-containing alcohol dehydrogenase family.</text>
</comment>
<gene>
    <name evidence="2" type="primary">dhaT</name>
</gene>
<evidence type="ECO:0000269" key="1">
    <source>
    </source>
</evidence>
<evidence type="ECO:0000303" key="2">
    <source>
    </source>
</evidence>
<evidence type="ECO:0000305" key="3"/>
<reference key="1">
    <citation type="journal article" date="1995" name="J. Bacteriol.">
        <title>Purification of 1,3-propanediol dehydrogenase from Citrobacter freundii and cloning, sequencing, and overexpression of the corresponding gene in Escherichia coli.</title>
        <authorList>
            <person name="Daniel R."/>
            <person name="Boenigk R."/>
            <person name="Gottschalk G."/>
        </authorList>
    </citation>
    <scope>NUCLEOTIDE SEQUENCE [GENOMIC DNA]</scope>
    <scope>PROTEIN SEQUENCE OF 2-39</scope>
    <scope>FUNCTION</scope>
    <scope>CATALYTIC ACTIVITY</scope>
    <scope>COFACTOR</scope>
    <scope>ACTIVITY REGULATION</scope>
    <scope>BIOPHYSICOCHEMICAL PROPERTIES</scope>
    <scope>SUBUNIT</scope>
    <source>
        <strain>ATCC 6750 / DSM 30040 / NCIB 8173 / M8BK</strain>
    </source>
</reference>
<organism>
    <name type="scientific">Citrobacter freundii</name>
    <dbReference type="NCBI Taxonomy" id="546"/>
    <lineage>
        <taxon>Bacteria</taxon>
        <taxon>Pseudomonadati</taxon>
        <taxon>Pseudomonadota</taxon>
        <taxon>Gammaproteobacteria</taxon>
        <taxon>Enterobacterales</taxon>
        <taxon>Enterobacteriaceae</taxon>
        <taxon>Citrobacter</taxon>
        <taxon>Citrobacter freundii complex</taxon>
    </lineage>
</organism>
<sequence>MSYRMFDYLVPNVNFFGPNAISVVGERCKLLGGKKALLVTDKGLRAIKDGAVDKTLTHLREAGIDVVVFDGVEPNPKDTNVRDGLEVFRKEHCDIIVTVGGGSPHDCGKGIGIAATHEGDLYSYAGIETLTNPLPPIVAVNTTAGTASEVTRHCVLTNTKTKVKFVIVSWRNLPSVSINDPLLMLGKPAPLTAATGMDALTHAVEAYISKDANPVTDAAAIQAIRLIARNLRQAVALGSNLKARENMAYASLLAGMAFNNANLGYVHAMAHQLGGLYDMPHGVANAVLLPHVARYNLIANPEKFADIAEFMGENTDGLSTMDAAELAIHAIARLSADIGIPQHLRDLGVKEADFPYMAEMALKDGNAFSNPRKGNEKEIAEIFRQAF</sequence>
<name>DHAT_CITFR</name>